<proteinExistence type="inferred from homology"/>
<organism>
    <name type="scientific">Rotavirus A (isolate RVA/Human/Japan/IGV-80-3/XXXX/GXP[X])</name>
    <name type="common">RV-A</name>
    <dbReference type="NCBI Taxonomy" id="31574"/>
    <lineage>
        <taxon>Viruses</taxon>
        <taxon>Riboviria</taxon>
        <taxon>Orthornavirae</taxon>
        <taxon>Duplornaviricota</taxon>
        <taxon>Resentoviricetes</taxon>
        <taxon>Reovirales</taxon>
        <taxon>Sedoreoviridae</taxon>
        <taxon>Rotavirus</taxon>
        <taxon>Rotavirus A</taxon>
    </lineage>
</organism>
<feature type="chain" id="PRO_0000149556" description="Non-structural protein 1">
    <location>
        <begin position="1"/>
        <end position="486"/>
    </location>
</feature>
<feature type="region of interest" description="RNA-binding" evidence="1">
    <location>
        <begin position="1"/>
        <end position="81"/>
    </location>
</feature>
<feature type="region of interest" description="Zinc-binding domain" evidence="1">
    <location>
        <begin position="42"/>
        <end position="79"/>
    </location>
</feature>
<feature type="region of interest" description="Important for cytoskeleton localization" evidence="1">
    <location>
        <begin position="82"/>
        <end position="176"/>
    </location>
</feature>
<feature type="region of interest" description="Interaction with host IRF3" evidence="1">
    <location>
        <begin position="317"/>
        <end position="486"/>
    </location>
</feature>
<feature type="short sequence motif" description="IKBKB-like degron (ILD) motif" evidence="1">
    <location>
        <begin position="479"/>
        <end position="483"/>
    </location>
</feature>
<feature type="short sequence motif" description="pLxIS motif" evidence="1">
    <location>
        <begin position="480"/>
        <end position="483"/>
    </location>
</feature>
<dbReference type="EMBL" id="X59297">
    <property type="protein sequence ID" value="CAA41986.1"/>
    <property type="molecule type" value="Genomic_RNA"/>
</dbReference>
<dbReference type="PIR" id="S15470">
    <property type="entry name" value="S15470"/>
</dbReference>
<dbReference type="SMR" id="P30212"/>
<dbReference type="GO" id="GO:0030430">
    <property type="term" value="C:host cell cytoplasm"/>
    <property type="evidence" value="ECO:0007669"/>
    <property type="project" value="UniProtKB-UniRule"/>
</dbReference>
<dbReference type="GO" id="GO:0044163">
    <property type="term" value="C:host cytoskeleton"/>
    <property type="evidence" value="ECO:0007669"/>
    <property type="project" value="UniProtKB-SubCell"/>
</dbReference>
<dbReference type="GO" id="GO:0046872">
    <property type="term" value="F:metal ion binding"/>
    <property type="evidence" value="ECO:0007669"/>
    <property type="project" value="UniProtKB-UniRule"/>
</dbReference>
<dbReference type="GO" id="GO:0003723">
    <property type="term" value="F:RNA binding"/>
    <property type="evidence" value="ECO:0007669"/>
    <property type="project" value="UniProtKB-UniRule"/>
</dbReference>
<dbReference type="GO" id="GO:0039548">
    <property type="term" value="P:symbiont-mediated suppression of host cytoplasmic pattern recognition receptor signaling pathway via inhibition of IRF3 activity"/>
    <property type="evidence" value="ECO:0007669"/>
    <property type="project" value="UniProtKB-UniRule"/>
</dbReference>
<dbReference type="GO" id="GO:0039557">
    <property type="term" value="P:symbiont-mediated suppression of host cytoplasmic pattern recognition receptor signaling pathway via inhibition of IRF7 activity"/>
    <property type="evidence" value="ECO:0007669"/>
    <property type="project" value="UniProtKB-UniRule"/>
</dbReference>
<dbReference type="GO" id="GO:0085034">
    <property type="term" value="P:symbiont-mediated suppression of host NF-kappaB cascade"/>
    <property type="evidence" value="ECO:0007669"/>
    <property type="project" value="UniProtKB-UniRule"/>
</dbReference>
<dbReference type="HAMAP" id="MF_04088">
    <property type="entry name" value="ROTA_NSP1"/>
    <property type="match status" value="1"/>
</dbReference>
<dbReference type="InterPro" id="IPR002148">
    <property type="entry name" value="Rotavirus_NSP1"/>
</dbReference>
<dbReference type="Pfam" id="PF00981">
    <property type="entry name" value="Rota_NS53"/>
    <property type="match status" value="1"/>
</dbReference>
<accession>P30212</accession>
<organismHost>
    <name type="scientific">Homo sapiens</name>
    <name type="common">Human</name>
    <dbReference type="NCBI Taxonomy" id="9606"/>
</organismHost>
<reference key="1">
    <citation type="submission" date="1991-05" db="EMBL/GenBank/DDBJ databases">
        <authorList>
            <person name="Kawagishi M."/>
            <person name="Matsuno S."/>
        </authorList>
    </citation>
    <scope>NUCLEOTIDE SEQUENCE [GENOMIC RNA]</scope>
</reference>
<protein>
    <recommendedName>
        <fullName evidence="1">Non-structural protein 1</fullName>
        <shortName evidence="1">NSP1</shortName>
    </recommendedName>
    <alternativeName>
        <fullName evidence="1">NCVP2</fullName>
    </alternativeName>
    <alternativeName>
        <fullName evidence="1">Non-structural RNA-binding protein 53</fullName>
        <shortName evidence="1">NS53</shortName>
    </alternativeName>
</protein>
<comment type="function">
    <text evidence="1">Plays a role in the inhibition of host innate immunity by inducing the degradation of key host factors required to activate interferon production such as IRF3, IRF5 or IRF7. Associates with components of cullin RING ligases (CRLs) including CUL1 or CUL3, which are essential multisubunit ubiquitination complexes, to modulate their activities. Recognizes the host NF-kappa-B regulator BTRC through the presence of a DSGXS motif in the C-terminal substrate recognition domain.</text>
</comment>
<comment type="subunit">
    <text evidence="1">Interacts (via C-terminus) with host IRF3; this interaction leads to IRF3 degradation. Interacts with host IRF7; this interaction leads to IRF7 degradation. Interacts with host CUL1 and CUL3. Interacts with host BTRC.</text>
</comment>
<comment type="subcellular location">
    <subcellularLocation>
        <location evidence="1">Host cytoplasm</location>
        <location evidence="1">Host cytoskeleton</location>
    </subcellularLocation>
</comment>
<comment type="domain">
    <text evidence="1">The integrity of the zinc-binding domain in NSP1 is important for degradation of host IRF3.</text>
</comment>
<comment type="domain">
    <text evidence="1">The pLxIS motif targets host IRF3 for degradation; however phosphorylation of NSP1 pLxIS motif is not required for its activity.</text>
</comment>
<comment type="PTM">
    <text evidence="1">The C-terminal region is phosphorylated by host CKII/CSNK2A1. Phosphorylation of the DSGXS motif is essential for host NF-kappa-B inhibition.</text>
</comment>
<comment type="similarity">
    <text evidence="1">Belongs to the rotavirus NSP1 family.</text>
</comment>
<keyword id="KW-1035">Host cytoplasm</keyword>
<keyword id="KW-1037">Host cytoskeleton</keyword>
<keyword id="KW-0945">Host-virus interaction</keyword>
<keyword id="KW-1090">Inhibition of host innate immune response by virus</keyword>
<keyword id="KW-1092">Inhibition of host IRF3 by virus</keyword>
<keyword id="KW-1093">Inhibition of host IRF7 by virus</keyword>
<keyword id="KW-1100">Inhibition of host NF-kappa-B by virus</keyword>
<keyword id="KW-1113">Inhibition of host RLR pathway by virus</keyword>
<keyword id="KW-0922">Interferon antiviral system evasion</keyword>
<keyword id="KW-0479">Metal-binding</keyword>
<keyword id="KW-0597">Phosphoprotein</keyword>
<keyword id="KW-0694">RNA-binding</keyword>
<keyword id="KW-0899">Viral immunoevasion</keyword>
<sequence>MATFKDACYHYKRINKLNHTVLKLGVNDTWRPSPPTKYKGWCLDCCQHTDLTYCRGCTMYHVCQWCSQYGRCFLDNEPHLLRMRTFKNEVTKDDLKNLIDMYETLFPMNQRIVCRFINNTRQHKCRNECMTQWYNHLLLPITLQSMSIELDGDVYYVFGYYDNMNSINQTPFSFTNLVDIYDKLLLDDVNFTRMSFLPASLQQEYALRYFSKSRFISEQRKCVNDSHFSINVIENLHNPSFKVQITRNCSELSFDWNKACKLVKKISAYFDILKTSHIEFYSVSTRCRIFTQCKLKMASKLIKPNYITSNHKTLATEVHNCKWCSVNNSYTVWNDFRIKNIYDNIFNFLRALVKSNVNIGHCSSQEKIYEYVEDVLNVCDDERWKTSIMEIFNCLEPVELDDVKYVLLNHEINWDVINVLVHSIGKVPQILTLENVIAIMQSIIYEWFDIRYMRNTPMVTFTIDKLRRLHTGLKTVDYDSGISDIE</sequence>
<evidence type="ECO:0000255" key="1">
    <source>
        <dbReference type="HAMAP-Rule" id="MF_04088"/>
    </source>
</evidence>
<name>NSP1_ROTHI</name>